<accession>Q04G79</accession>
<feature type="chain" id="PRO_0000293844" description="Small ribosomal subunit protein uS3">
    <location>
        <begin position="1"/>
        <end position="267"/>
    </location>
</feature>
<feature type="domain" description="KH type-2" evidence="1">
    <location>
        <begin position="39"/>
        <end position="114"/>
    </location>
</feature>
<feature type="region of interest" description="Disordered" evidence="2">
    <location>
        <begin position="229"/>
        <end position="267"/>
    </location>
</feature>
<feature type="compositionally biased region" description="Low complexity" evidence="2">
    <location>
        <begin position="229"/>
        <end position="248"/>
    </location>
</feature>
<proteinExistence type="inferred from homology"/>
<protein>
    <recommendedName>
        <fullName evidence="1">Small ribosomal subunit protein uS3</fullName>
    </recommendedName>
    <alternativeName>
        <fullName evidence="3">30S ribosomal protein S3</fullName>
    </alternativeName>
</protein>
<dbReference type="EMBL" id="CP000411">
    <property type="protein sequence ID" value="ABJ56543.1"/>
    <property type="molecule type" value="Genomic_DNA"/>
</dbReference>
<dbReference type="RefSeq" id="WP_002818460.1">
    <property type="nucleotide sequence ID" value="NC_008528.1"/>
</dbReference>
<dbReference type="SMR" id="Q04G79"/>
<dbReference type="STRING" id="203123.OEOE_0601"/>
<dbReference type="GeneID" id="75065423"/>
<dbReference type="KEGG" id="ooe:OEOE_0601"/>
<dbReference type="eggNOG" id="COG0092">
    <property type="taxonomic scope" value="Bacteria"/>
</dbReference>
<dbReference type="HOGENOM" id="CLU_058591_0_2_9"/>
<dbReference type="Proteomes" id="UP000000774">
    <property type="component" value="Chromosome"/>
</dbReference>
<dbReference type="GO" id="GO:0022627">
    <property type="term" value="C:cytosolic small ribosomal subunit"/>
    <property type="evidence" value="ECO:0007669"/>
    <property type="project" value="TreeGrafter"/>
</dbReference>
<dbReference type="GO" id="GO:0003729">
    <property type="term" value="F:mRNA binding"/>
    <property type="evidence" value="ECO:0007669"/>
    <property type="project" value="UniProtKB-UniRule"/>
</dbReference>
<dbReference type="GO" id="GO:0019843">
    <property type="term" value="F:rRNA binding"/>
    <property type="evidence" value="ECO:0007669"/>
    <property type="project" value="UniProtKB-UniRule"/>
</dbReference>
<dbReference type="GO" id="GO:0003735">
    <property type="term" value="F:structural constituent of ribosome"/>
    <property type="evidence" value="ECO:0007669"/>
    <property type="project" value="InterPro"/>
</dbReference>
<dbReference type="GO" id="GO:0006412">
    <property type="term" value="P:translation"/>
    <property type="evidence" value="ECO:0007669"/>
    <property type="project" value="UniProtKB-UniRule"/>
</dbReference>
<dbReference type="CDD" id="cd02412">
    <property type="entry name" value="KH-II_30S_S3"/>
    <property type="match status" value="1"/>
</dbReference>
<dbReference type="FunFam" id="3.30.300.20:FF:000001">
    <property type="entry name" value="30S ribosomal protein S3"/>
    <property type="match status" value="1"/>
</dbReference>
<dbReference type="Gene3D" id="3.30.300.20">
    <property type="match status" value="1"/>
</dbReference>
<dbReference type="Gene3D" id="3.30.1140.32">
    <property type="entry name" value="Ribosomal protein S3, C-terminal domain"/>
    <property type="match status" value="1"/>
</dbReference>
<dbReference type="HAMAP" id="MF_01309_B">
    <property type="entry name" value="Ribosomal_uS3_B"/>
    <property type="match status" value="1"/>
</dbReference>
<dbReference type="InterPro" id="IPR004087">
    <property type="entry name" value="KH_dom"/>
</dbReference>
<dbReference type="InterPro" id="IPR015946">
    <property type="entry name" value="KH_dom-like_a/b"/>
</dbReference>
<dbReference type="InterPro" id="IPR004044">
    <property type="entry name" value="KH_dom_type_2"/>
</dbReference>
<dbReference type="InterPro" id="IPR009019">
    <property type="entry name" value="KH_sf_prok-type"/>
</dbReference>
<dbReference type="InterPro" id="IPR036419">
    <property type="entry name" value="Ribosomal_S3_C_sf"/>
</dbReference>
<dbReference type="InterPro" id="IPR005704">
    <property type="entry name" value="Ribosomal_uS3_bac-typ"/>
</dbReference>
<dbReference type="InterPro" id="IPR001351">
    <property type="entry name" value="Ribosomal_uS3_C"/>
</dbReference>
<dbReference type="InterPro" id="IPR018280">
    <property type="entry name" value="Ribosomal_uS3_CS"/>
</dbReference>
<dbReference type="NCBIfam" id="TIGR01009">
    <property type="entry name" value="rpsC_bact"/>
    <property type="match status" value="1"/>
</dbReference>
<dbReference type="PANTHER" id="PTHR11760">
    <property type="entry name" value="30S/40S RIBOSOMAL PROTEIN S3"/>
    <property type="match status" value="1"/>
</dbReference>
<dbReference type="PANTHER" id="PTHR11760:SF19">
    <property type="entry name" value="SMALL RIBOSOMAL SUBUNIT PROTEIN US3C"/>
    <property type="match status" value="1"/>
</dbReference>
<dbReference type="Pfam" id="PF07650">
    <property type="entry name" value="KH_2"/>
    <property type="match status" value="1"/>
</dbReference>
<dbReference type="Pfam" id="PF00189">
    <property type="entry name" value="Ribosomal_S3_C"/>
    <property type="match status" value="1"/>
</dbReference>
<dbReference type="SMART" id="SM00322">
    <property type="entry name" value="KH"/>
    <property type="match status" value="1"/>
</dbReference>
<dbReference type="SUPFAM" id="SSF54814">
    <property type="entry name" value="Prokaryotic type KH domain (KH-domain type II)"/>
    <property type="match status" value="1"/>
</dbReference>
<dbReference type="SUPFAM" id="SSF54821">
    <property type="entry name" value="Ribosomal protein S3 C-terminal domain"/>
    <property type="match status" value="1"/>
</dbReference>
<dbReference type="PROSITE" id="PS50823">
    <property type="entry name" value="KH_TYPE_2"/>
    <property type="match status" value="1"/>
</dbReference>
<dbReference type="PROSITE" id="PS00548">
    <property type="entry name" value="RIBOSOMAL_S3"/>
    <property type="match status" value="1"/>
</dbReference>
<sequence length="267" mass="29956">MGQKINPIGFRVGVIRDWDAKWYADKKEYVPALQEDLRIRKYLETNLKDAAVDRITIERTEPTRINLTIHTAKPGIVIGRGGADVERLRSELSKIVDTYKGQHKRVNINIVEIRKPDLNAHLVGQQIAADLERRVAFRRAMRGAIQRVQRAGAKGVRTMVSGRLNGADIARKEQYTEGTVPLHTLRADIDYSWDEAMTSYGNLGIKTWIYRGDAENGQFIKDEDVAAAANNRGRGNNRGRGNSRQNGGRSRRPRQGQASTQGRGGNN</sequence>
<reference key="1">
    <citation type="journal article" date="2006" name="Proc. Natl. Acad. Sci. U.S.A.">
        <title>Comparative genomics of the lactic acid bacteria.</title>
        <authorList>
            <person name="Makarova K.S."/>
            <person name="Slesarev A."/>
            <person name="Wolf Y.I."/>
            <person name="Sorokin A."/>
            <person name="Mirkin B."/>
            <person name="Koonin E.V."/>
            <person name="Pavlov A."/>
            <person name="Pavlova N."/>
            <person name="Karamychev V."/>
            <person name="Polouchine N."/>
            <person name="Shakhova V."/>
            <person name="Grigoriev I."/>
            <person name="Lou Y."/>
            <person name="Rohksar D."/>
            <person name="Lucas S."/>
            <person name="Huang K."/>
            <person name="Goodstein D.M."/>
            <person name="Hawkins T."/>
            <person name="Plengvidhya V."/>
            <person name="Welker D."/>
            <person name="Hughes J."/>
            <person name="Goh Y."/>
            <person name="Benson A."/>
            <person name="Baldwin K."/>
            <person name="Lee J.-H."/>
            <person name="Diaz-Muniz I."/>
            <person name="Dosti B."/>
            <person name="Smeianov V."/>
            <person name="Wechter W."/>
            <person name="Barabote R."/>
            <person name="Lorca G."/>
            <person name="Altermann E."/>
            <person name="Barrangou R."/>
            <person name="Ganesan B."/>
            <person name="Xie Y."/>
            <person name="Rawsthorne H."/>
            <person name="Tamir D."/>
            <person name="Parker C."/>
            <person name="Breidt F."/>
            <person name="Broadbent J.R."/>
            <person name="Hutkins R."/>
            <person name="O'Sullivan D."/>
            <person name="Steele J."/>
            <person name="Unlu G."/>
            <person name="Saier M.H. Jr."/>
            <person name="Klaenhammer T."/>
            <person name="Richardson P."/>
            <person name="Kozyavkin S."/>
            <person name="Weimer B.C."/>
            <person name="Mills D.A."/>
        </authorList>
    </citation>
    <scope>NUCLEOTIDE SEQUENCE [LARGE SCALE GENOMIC DNA]</scope>
    <source>
        <strain>ATCC BAA-331 / PSU-1</strain>
    </source>
</reference>
<comment type="function">
    <text evidence="1">Binds the lower part of the 30S subunit head. Binds mRNA in the 70S ribosome, positioning it for translation.</text>
</comment>
<comment type="subunit">
    <text evidence="1">Part of the 30S ribosomal subunit. Forms a tight complex with proteins S10 and S14.</text>
</comment>
<comment type="similarity">
    <text evidence="1">Belongs to the universal ribosomal protein uS3 family.</text>
</comment>
<name>RS3_OENOB</name>
<gene>
    <name evidence="1" type="primary">rpsC</name>
    <name type="ordered locus">OEOE_0601</name>
</gene>
<keyword id="KW-1185">Reference proteome</keyword>
<keyword id="KW-0687">Ribonucleoprotein</keyword>
<keyword id="KW-0689">Ribosomal protein</keyword>
<keyword id="KW-0694">RNA-binding</keyword>
<keyword id="KW-0699">rRNA-binding</keyword>
<evidence type="ECO:0000255" key="1">
    <source>
        <dbReference type="HAMAP-Rule" id="MF_01309"/>
    </source>
</evidence>
<evidence type="ECO:0000256" key="2">
    <source>
        <dbReference type="SAM" id="MobiDB-lite"/>
    </source>
</evidence>
<evidence type="ECO:0000305" key="3"/>
<organism>
    <name type="scientific">Oenococcus oeni (strain ATCC BAA-331 / PSU-1)</name>
    <dbReference type="NCBI Taxonomy" id="203123"/>
    <lineage>
        <taxon>Bacteria</taxon>
        <taxon>Bacillati</taxon>
        <taxon>Bacillota</taxon>
        <taxon>Bacilli</taxon>
        <taxon>Lactobacillales</taxon>
        <taxon>Lactobacillaceae</taxon>
        <taxon>Oenococcus</taxon>
    </lineage>
</organism>